<proteinExistence type="inferred from homology"/>
<comment type="function">
    <text evidence="1">The RuvA-RuvB-RuvC complex processes Holliday junction (HJ) DNA during genetic recombination and DNA repair, while the RuvA-RuvB complex plays an important role in the rescue of blocked DNA replication forks via replication fork reversal (RFR). RuvA specifically binds to HJ cruciform DNA, conferring on it an open structure. The RuvB hexamer acts as an ATP-dependent pump, pulling dsDNA into and through the RuvAB complex. HJ branch migration allows RuvC to scan DNA until it finds its consensus sequence, where it cleaves and resolves the cruciform DNA.</text>
</comment>
<comment type="subunit">
    <text evidence="1">Homotetramer. Forms an RuvA(8)-RuvB(12)-Holliday junction (HJ) complex. HJ DNA is sandwiched between 2 RuvA tetramers; dsDNA enters through RuvA and exits via RuvB. An RuvB hexamer assembles on each DNA strand where it exits the tetramer. Each RuvB hexamer is contacted by two RuvA subunits (via domain III) on 2 adjacent RuvB subunits; this complex drives branch migration. In the full resolvosome a probable DNA-RuvA(4)-RuvB(12)-RuvC(2) complex forms which resolves the HJ.</text>
</comment>
<comment type="subcellular location">
    <subcellularLocation>
        <location evidence="1">Cytoplasm</location>
    </subcellularLocation>
</comment>
<comment type="domain">
    <text evidence="1">Has three domains with a flexible linker between the domains II and III and assumes an 'L' shape. Domain III is highly mobile and contacts RuvB.</text>
</comment>
<comment type="similarity">
    <text evidence="1">Belongs to the RuvA family.</text>
</comment>
<protein>
    <recommendedName>
        <fullName evidence="1">Holliday junction branch migration complex subunit RuvA</fullName>
    </recommendedName>
</protein>
<dbReference type="EMBL" id="CP000781">
    <property type="protein sequence ID" value="ABS68297.1"/>
    <property type="molecule type" value="Genomic_DNA"/>
</dbReference>
<dbReference type="SMR" id="A7IJV4"/>
<dbReference type="STRING" id="78245.Xaut_3067"/>
<dbReference type="KEGG" id="xau:Xaut_3067"/>
<dbReference type="eggNOG" id="COG0632">
    <property type="taxonomic scope" value="Bacteria"/>
</dbReference>
<dbReference type="HOGENOM" id="CLU_087936_3_0_5"/>
<dbReference type="OrthoDB" id="5293449at2"/>
<dbReference type="PhylomeDB" id="A7IJV4"/>
<dbReference type="Proteomes" id="UP000002417">
    <property type="component" value="Chromosome"/>
</dbReference>
<dbReference type="GO" id="GO:0005737">
    <property type="term" value="C:cytoplasm"/>
    <property type="evidence" value="ECO:0007669"/>
    <property type="project" value="UniProtKB-SubCell"/>
</dbReference>
<dbReference type="GO" id="GO:0009379">
    <property type="term" value="C:Holliday junction helicase complex"/>
    <property type="evidence" value="ECO:0007669"/>
    <property type="project" value="InterPro"/>
</dbReference>
<dbReference type="GO" id="GO:0048476">
    <property type="term" value="C:Holliday junction resolvase complex"/>
    <property type="evidence" value="ECO:0007669"/>
    <property type="project" value="UniProtKB-UniRule"/>
</dbReference>
<dbReference type="GO" id="GO:0005524">
    <property type="term" value="F:ATP binding"/>
    <property type="evidence" value="ECO:0007669"/>
    <property type="project" value="InterPro"/>
</dbReference>
<dbReference type="GO" id="GO:0000400">
    <property type="term" value="F:four-way junction DNA binding"/>
    <property type="evidence" value="ECO:0007669"/>
    <property type="project" value="UniProtKB-UniRule"/>
</dbReference>
<dbReference type="GO" id="GO:0009378">
    <property type="term" value="F:four-way junction helicase activity"/>
    <property type="evidence" value="ECO:0007669"/>
    <property type="project" value="InterPro"/>
</dbReference>
<dbReference type="GO" id="GO:0006310">
    <property type="term" value="P:DNA recombination"/>
    <property type="evidence" value="ECO:0007669"/>
    <property type="project" value="UniProtKB-UniRule"/>
</dbReference>
<dbReference type="GO" id="GO:0006281">
    <property type="term" value="P:DNA repair"/>
    <property type="evidence" value="ECO:0007669"/>
    <property type="project" value="UniProtKB-UniRule"/>
</dbReference>
<dbReference type="CDD" id="cd14332">
    <property type="entry name" value="UBA_RuvA_C"/>
    <property type="match status" value="1"/>
</dbReference>
<dbReference type="Gene3D" id="1.10.150.20">
    <property type="entry name" value="5' to 3' exonuclease, C-terminal subdomain"/>
    <property type="match status" value="1"/>
</dbReference>
<dbReference type="Gene3D" id="1.10.8.10">
    <property type="entry name" value="DNA helicase RuvA subunit, C-terminal domain"/>
    <property type="match status" value="1"/>
</dbReference>
<dbReference type="Gene3D" id="2.40.50.140">
    <property type="entry name" value="Nucleic acid-binding proteins"/>
    <property type="match status" value="1"/>
</dbReference>
<dbReference type="HAMAP" id="MF_00031">
    <property type="entry name" value="DNA_HJ_migration_RuvA"/>
    <property type="match status" value="1"/>
</dbReference>
<dbReference type="InterPro" id="IPR013849">
    <property type="entry name" value="DNA_helicase_Holl-junc_RuvA_I"/>
</dbReference>
<dbReference type="InterPro" id="IPR003583">
    <property type="entry name" value="Hlx-hairpin-Hlx_DNA-bd_motif"/>
</dbReference>
<dbReference type="InterPro" id="IPR012340">
    <property type="entry name" value="NA-bd_OB-fold"/>
</dbReference>
<dbReference type="InterPro" id="IPR000085">
    <property type="entry name" value="RuvA"/>
</dbReference>
<dbReference type="InterPro" id="IPR010994">
    <property type="entry name" value="RuvA_2-like"/>
</dbReference>
<dbReference type="InterPro" id="IPR011114">
    <property type="entry name" value="RuvA_C"/>
</dbReference>
<dbReference type="InterPro" id="IPR036267">
    <property type="entry name" value="RuvA_C_sf"/>
</dbReference>
<dbReference type="NCBIfam" id="TIGR00084">
    <property type="entry name" value="ruvA"/>
    <property type="match status" value="1"/>
</dbReference>
<dbReference type="Pfam" id="PF14520">
    <property type="entry name" value="HHH_5"/>
    <property type="match status" value="1"/>
</dbReference>
<dbReference type="Pfam" id="PF07499">
    <property type="entry name" value="RuvA_C"/>
    <property type="match status" value="1"/>
</dbReference>
<dbReference type="Pfam" id="PF01330">
    <property type="entry name" value="RuvA_N"/>
    <property type="match status" value="1"/>
</dbReference>
<dbReference type="SMART" id="SM00278">
    <property type="entry name" value="HhH1"/>
    <property type="match status" value="2"/>
</dbReference>
<dbReference type="SUPFAM" id="SSF46929">
    <property type="entry name" value="DNA helicase RuvA subunit, C-terminal domain"/>
    <property type="match status" value="1"/>
</dbReference>
<dbReference type="SUPFAM" id="SSF50249">
    <property type="entry name" value="Nucleic acid-binding proteins"/>
    <property type="match status" value="1"/>
</dbReference>
<dbReference type="SUPFAM" id="SSF47781">
    <property type="entry name" value="RuvA domain 2-like"/>
    <property type="match status" value="1"/>
</dbReference>
<accession>A7IJV4</accession>
<gene>
    <name evidence="1" type="primary">ruvA</name>
    <name type="ordered locus">Xaut_3067</name>
</gene>
<organism>
    <name type="scientific">Xanthobacter autotrophicus (strain ATCC BAA-1158 / Py2)</name>
    <dbReference type="NCBI Taxonomy" id="78245"/>
    <lineage>
        <taxon>Bacteria</taxon>
        <taxon>Pseudomonadati</taxon>
        <taxon>Pseudomonadota</taxon>
        <taxon>Alphaproteobacteria</taxon>
        <taxon>Hyphomicrobiales</taxon>
        <taxon>Xanthobacteraceae</taxon>
        <taxon>Xanthobacter</taxon>
    </lineage>
</organism>
<reference key="1">
    <citation type="submission" date="2007-07" db="EMBL/GenBank/DDBJ databases">
        <title>Complete sequence of chromosome of Xanthobacter autotrophicus Py2.</title>
        <authorList>
            <consortium name="US DOE Joint Genome Institute"/>
            <person name="Copeland A."/>
            <person name="Lucas S."/>
            <person name="Lapidus A."/>
            <person name="Barry K."/>
            <person name="Glavina del Rio T."/>
            <person name="Hammon N."/>
            <person name="Israni S."/>
            <person name="Dalin E."/>
            <person name="Tice H."/>
            <person name="Pitluck S."/>
            <person name="Sims D."/>
            <person name="Brettin T."/>
            <person name="Bruce D."/>
            <person name="Detter J.C."/>
            <person name="Han C."/>
            <person name="Tapia R."/>
            <person name="Brainard J."/>
            <person name="Schmutz J."/>
            <person name="Larimer F."/>
            <person name="Land M."/>
            <person name="Hauser L."/>
            <person name="Kyrpides N."/>
            <person name="Kim E."/>
            <person name="Ensigns S.A."/>
            <person name="Richardson P."/>
        </authorList>
    </citation>
    <scope>NUCLEOTIDE SEQUENCE [LARGE SCALE GENOMIC DNA]</scope>
    <source>
        <strain>ATCC BAA-1158 / Py2</strain>
    </source>
</reference>
<sequence length="205" mass="20961">MIGKLKGVVDTLEEDHVILDVHGVGYLVHCSGRTLSALPRAGEAAALFIETHVREDQIRLFGFSSAAERDWFRLLQGIQGIGTKTALAVLSTLSASELTQAIALGDKTTVARAPGVGPRVATRIITELKDKMPGFSASEPLAAQLGGGGVASAQGGAAADAVSALVNLGYGVPQANAAIAAALRGAGEGAKTEVLIRLGLKELAK</sequence>
<evidence type="ECO:0000255" key="1">
    <source>
        <dbReference type="HAMAP-Rule" id="MF_00031"/>
    </source>
</evidence>
<keyword id="KW-0963">Cytoplasm</keyword>
<keyword id="KW-0227">DNA damage</keyword>
<keyword id="KW-0233">DNA recombination</keyword>
<keyword id="KW-0234">DNA repair</keyword>
<keyword id="KW-0238">DNA-binding</keyword>
<keyword id="KW-1185">Reference proteome</keyword>
<feature type="chain" id="PRO_1000090387" description="Holliday junction branch migration complex subunit RuvA">
    <location>
        <begin position="1"/>
        <end position="205"/>
    </location>
</feature>
<feature type="region of interest" description="Domain I" evidence="1">
    <location>
        <begin position="1"/>
        <end position="64"/>
    </location>
</feature>
<feature type="region of interest" description="Domain II" evidence="1">
    <location>
        <begin position="65"/>
        <end position="143"/>
    </location>
</feature>
<feature type="region of interest" description="Flexible linker" evidence="1">
    <location>
        <begin position="144"/>
        <end position="152"/>
    </location>
</feature>
<feature type="region of interest" description="Domain III" evidence="1">
    <location>
        <begin position="153"/>
        <end position="205"/>
    </location>
</feature>
<name>RUVA_XANP2</name>